<keyword id="KW-0002">3D-structure</keyword>
<keyword id="KW-0119">Carbohydrate metabolism</keyword>
<keyword id="KW-0903">Direct protein sequencing</keyword>
<keyword id="KW-1015">Disulfide bond</keyword>
<keyword id="KW-0326">Glycosidase</keyword>
<keyword id="KW-0378">Hydrolase</keyword>
<keyword id="KW-0479">Metal-binding</keyword>
<keyword id="KW-0511">Multifunctional enzyme</keyword>
<keyword id="KW-0624">Polysaccharide degradation</keyword>
<keyword id="KW-0677">Repeat</keyword>
<keyword id="KW-0964">Secreted</keyword>
<keyword id="KW-0732">Signal</keyword>
<sequence length="1196" mass="130893">MTLYRSLWKKGCMLLLSLVLSLTAFIGSPSNTASAAVADDFQASVMGPLAKINDWGSFKKQLQTLKNNGVYAITTDVWWGYVESAGDNQFDWSYYKTYANAVKEAGLKWVPIISTHKCGGNVGDDCNIPLPSWLSSKGSADEMQFKDESGYANSEALSPLWSGTGKQYDELYASFAENFAGYKSIIPKIYLSGGPSGELRYPSYYPAAGWSYPGRGKFQAYTETAKNAFRTAMNDKYGSLDKINAAWGTKLTSLSQINPPTDGDGFYTNGGYNSAYGKDFLSWYQSVLEKHLGVIGAAAHKNFDSVFGVRIGAKISGLHWQMNNPAMPHGTEQAGGYYDYNRLIQKFKDADLDLTFTCLEMSDSGTAPNYSLPSTLVDTVSSIANAKGVRLNGENALPTGGSGFQKIEEKITKFGYHGFTLLRINNLVNNDGSPTGELSGFKQYIISKAKPDNNGGTGNKVTIYYKKGFNSPYIHYRPAGGSWTAAPGVKMQDAEISGYAKITVDIGSASQLEAAFNDGNNNWDSNNTKNYSFSTGTSTYTPGNSGNAGTITSGAPAGANPGDGGGTTNKVTVYYKKGFNSPYIHYRPAGGSWTAAPGVKMQDAEISGYAKITVDIGSASQLEAAFNDGNNNWDSNNTKNYLFSTGTSTYTPGSNGAAGTIRTGAPSGSVLSVVTSTYATDLNEVTGPIQTEKLSGVSLNVSTSTYAPNSNGVEVTAQTEAPSGAFTSMDLGTLSNPTSLNTDWSKQSIYFIMTDRFSNGDPSNDNYGGFNSNNSDQRKWHGGDFQGIINKLDYIKNMGFTAIWITPVTMQKSEYAYHGYHTYDFYAVDGHLGTMDKLQELVRKAHDKNIAVMVDVVVNHTGDFQPGNGFAKAPFDKADWYHHNGDITDGDYNSNNQWKIENGDVAGLDDLNHENPATANELKNWIKWLLNETGIDGLRLDTVKHVPKGFLKDFDQAANTFTMGEIFHGDPAYVGDYTRYLDAALDFPMYYTIKDVFGHDQSMRKIKDRYSDDRYYRDAQTNGVFIDNHDVKRFLNDASGKPGANYDKWPQLKAALGFTLTSRGIPIIYQGTEQGYSGGDDPANRENMNFNANHDLYQYIAKLNYVRNNHPALQNGSQREKWVDDSFYSFQRSKNGDEAIVFINNSWNSQTRTIGNFDNLSNGTRLTNQLSNDSVQINNGSITVTLAPKEVKVFTK</sequence>
<accession>P21543</accession>
<proteinExistence type="evidence at protein level"/>
<feature type="signal peptide">
    <location>
        <begin position="1"/>
        <end position="35"/>
    </location>
</feature>
<feature type="chain" id="PRO_0000001457" description="Beta/alpha-amylase">
    <location>
        <begin position="36"/>
        <end position="1196"/>
    </location>
</feature>
<feature type="repeat">
    <location>
        <begin position="455"/>
        <end position="558"/>
    </location>
</feature>
<feature type="repeat">
    <location>
        <begin position="565"/>
        <end position="668"/>
    </location>
</feature>
<feature type="region of interest" description="Beta-amylase">
    <location>
        <begin position="36"/>
        <end position="454"/>
    </location>
</feature>
<feature type="region of interest" description="Disordered" evidence="3">
    <location>
        <begin position="544"/>
        <end position="566"/>
    </location>
</feature>
<feature type="region of interest" description="Alpha-amylase">
    <location>
        <begin position="669"/>
        <end position="1196"/>
    </location>
</feature>
<feature type="compositionally biased region" description="Polar residues" evidence="3">
    <location>
        <begin position="544"/>
        <end position="553"/>
    </location>
</feature>
<feature type="active site" description="Proton donor" evidence="2">
    <location>
        <position position="198"/>
    </location>
</feature>
<feature type="active site" description="Proton acceptor" evidence="1">
    <location>
        <position position="394"/>
    </location>
</feature>
<feature type="binding site" evidence="1">
    <location>
        <position position="76"/>
    </location>
    <ligand>
        <name>substrate</name>
    </ligand>
</feature>
<feature type="binding site" evidence="1">
    <location>
        <position position="83"/>
    </location>
    <ligand>
        <name>Ca(2+)</name>
        <dbReference type="ChEBI" id="CHEBI:29108"/>
    </ligand>
</feature>
<feature type="binding site" evidence="1">
    <location>
        <position position="87"/>
    </location>
    <ligand>
        <name>Ca(2+)</name>
        <dbReference type="ChEBI" id="CHEBI:29108"/>
    </ligand>
</feature>
<feature type="binding site" evidence="1">
    <location>
        <position position="116"/>
    </location>
    <ligand>
        <name>substrate</name>
    </ligand>
</feature>
<feature type="binding site" evidence="1">
    <location>
        <position position="124"/>
    </location>
    <ligand>
        <name>substrate</name>
    </ligand>
</feature>
<feature type="binding site" evidence="1">
    <location>
        <position position="170"/>
    </location>
    <ligand>
        <name>Ca(2+)</name>
        <dbReference type="ChEBI" id="CHEBI:29108"/>
    </ligand>
</feature>
<feature type="binding site" evidence="1">
    <location>
        <position position="314"/>
    </location>
    <ligand>
        <name>substrate</name>
    </ligand>
</feature>
<feature type="binding site" evidence="1">
    <location>
        <position position="319"/>
    </location>
    <ligand>
        <name>substrate</name>
    </ligand>
</feature>
<feature type="binding site" evidence="1">
    <location>
        <position position="357"/>
    </location>
    <ligand>
        <name>substrate</name>
    </ligand>
</feature>
<feature type="binding site" evidence="1">
    <location>
        <begin position="395"/>
        <end position="396"/>
    </location>
    <ligand>
        <name>substrate</name>
    </ligand>
</feature>
<feature type="binding site" evidence="1">
    <location>
        <position position="423"/>
    </location>
    <ligand>
        <name>substrate</name>
    </ligand>
</feature>
<feature type="disulfide bond" evidence="4">
    <location>
        <begin position="118"/>
        <end position="126"/>
    </location>
</feature>
<feature type="mutagenesis site" description="5-fold decrease in activity." evidence="4">
    <original>C</original>
    <variation>S</variation>
    <location>
        <position position="118"/>
    </location>
</feature>
<feature type="mutagenesis site" description="20-fold decrease in activity." evidence="4">
    <original>C</original>
    <variation>V</variation>
    <location>
        <position position="126"/>
    </location>
</feature>
<feature type="mutagenesis site" description="60-fold decrease in activity." evidence="4">
    <original>C</original>
    <variation>S</variation>
    <location>
        <position position="358"/>
    </location>
</feature>
<feature type="sequence conflict" description="In Ref. 3; CAA68344." evidence="5" ref="3">
    <original>M</original>
    <variation>MIGL</variation>
    <location>
        <position position="1"/>
    </location>
</feature>
<feature type="sequence conflict" description="In Ref. 3; CAA68344." evidence="5" ref="3">
    <original>N</original>
    <variation>S</variation>
    <location>
        <position position="67"/>
    </location>
</feature>
<feature type="sequence conflict" description="In Ref. 3; CAA68344." evidence="5" ref="3">
    <original>N</original>
    <variation>D</variation>
    <location>
        <position position="100"/>
    </location>
</feature>
<feature type="sequence conflict" description="In Ref. 3; CAA68344." evidence="5" ref="3">
    <original>S</original>
    <variation>N</variation>
    <location>
        <position position="154"/>
    </location>
</feature>
<feature type="sequence conflict" description="In Ref. 3; CAA68344." evidence="5" ref="3">
    <original>E</original>
    <variation>Q</variation>
    <location>
        <position position="177"/>
    </location>
</feature>
<feature type="sequence conflict" description="In Ref. 3; CAA68344." evidence="5" ref="3">
    <original>NA</original>
    <variation>KS</variation>
    <location>
        <begin position="227"/>
        <end position="228"/>
    </location>
</feature>
<feature type="sequence conflict" description="In Ref. 3; CAA68344." evidence="5" ref="3">
    <original>G</original>
    <variation>S</variation>
    <location>
        <position position="330"/>
    </location>
</feature>
<feature type="sequence conflict" description="In Ref. 3; CAA68344." evidence="5" ref="3">
    <original>N</original>
    <variation>S</variation>
    <location>
        <position position="425"/>
    </location>
</feature>
<feature type="sequence conflict" description="In Ref. 3; CAA68344." evidence="5" ref="3">
    <original>D</original>
    <variation>A</variation>
    <location>
        <position position="493"/>
    </location>
</feature>
<feature type="sequence conflict" description="In Ref. 3; CAA68344." evidence="5" ref="3">
    <original>S</original>
    <variation>L</variation>
    <location>
        <position position="532"/>
    </location>
</feature>
<feature type="sequence conflict" description="In Ref. 3; CAA68344." evidence="5" ref="3">
    <original>A</original>
    <variation>T</variation>
    <location>
        <position position="559"/>
    </location>
</feature>
<feature type="sequence conflict" description="In Ref. 3; CAA68344." evidence="5" ref="3">
    <original>A</original>
    <variation>T</variation>
    <location>
        <position position="665"/>
    </location>
</feature>
<feature type="sequence conflict" description="In Ref. 3; CAA68344." evidence="5" ref="3">
    <original>D</original>
    <variation>N</variation>
    <location>
        <position position="681"/>
    </location>
</feature>
<feature type="sequence conflict" description="In Ref. 3; CAA68344." evidence="5" ref="3">
    <original>T</original>
    <variation>A</variation>
    <location>
        <position position="686"/>
    </location>
</feature>
<feature type="sequence conflict" description="In Ref. 3; CAA68344." evidence="5" ref="3">
    <original>AFTS</original>
    <variation>VFSP</variation>
    <location>
        <begin position="725"/>
        <end position="728"/>
    </location>
</feature>
<feature type="sequence conflict" description="In Ref. 3; CAA68344." evidence="5" ref="3">
    <original>N</original>
    <variation>K</variation>
    <location>
        <position position="736"/>
    </location>
</feature>
<feature type="sequence conflict" description="In Ref. 3; CAA68344." evidence="5" ref="3">
    <original>N</original>
    <variation>S</variation>
    <location>
        <position position="741"/>
    </location>
</feature>
<feature type="sequence conflict" description="In Ref. 3; CAA68344." evidence="5" ref="3">
    <original>S</original>
    <variation>N</variation>
    <location>
        <position position="758"/>
    </location>
</feature>
<feature type="strand" evidence="8">
    <location>
        <begin position="42"/>
        <end position="46"/>
    </location>
</feature>
<feature type="helix" evidence="8">
    <location>
        <begin position="55"/>
        <end position="67"/>
    </location>
</feature>
<feature type="strand" evidence="8">
    <location>
        <begin position="72"/>
        <end position="78"/>
    </location>
</feature>
<feature type="helix" evidence="8">
    <location>
        <begin position="79"/>
        <end position="82"/>
    </location>
</feature>
<feature type="helix" evidence="8">
    <location>
        <begin position="93"/>
        <end position="104"/>
    </location>
</feature>
<feature type="strand" evidence="8">
    <location>
        <begin position="108"/>
        <end position="114"/>
    </location>
</feature>
<feature type="helix" evidence="8">
    <location>
        <begin position="132"/>
        <end position="136"/>
    </location>
</feature>
<feature type="helix" evidence="8">
    <location>
        <begin position="140"/>
        <end position="143"/>
    </location>
</feature>
<feature type="strand" evidence="8">
    <location>
        <begin position="144"/>
        <end position="146"/>
    </location>
</feature>
<feature type="helix" evidence="8">
    <location>
        <begin position="163"/>
        <end position="179"/>
    </location>
</feature>
<feature type="helix" evidence="8">
    <location>
        <begin position="180"/>
        <end position="185"/>
    </location>
</feature>
<feature type="strand" evidence="8">
    <location>
        <begin position="188"/>
        <end position="191"/>
    </location>
</feature>
<feature type="helix" evidence="8">
    <location>
        <begin position="195"/>
        <end position="197"/>
    </location>
</feature>
<feature type="strand" evidence="8">
    <location>
        <begin position="198"/>
        <end position="200"/>
    </location>
</feature>
<feature type="helix" evidence="8">
    <location>
        <begin position="206"/>
        <end position="208"/>
    </location>
</feature>
<feature type="helix" evidence="8">
    <location>
        <begin position="223"/>
        <end position="237"/>
    </location>
</feature>
<feature type="helix" evidence="8">
    <location>
        <begin position="240"/>
        <end position="247"/>
    </location>
</feature>
<feature type="helix" evidence="8">
    <location>
        <begin position="254"/>
        <end position="256"/>
    </location>
</feature>
<feature type="turn" evidence="8">
    <location>
        <begin position="264"/>
        <end position="269"/>
    </location>
</feature>
<feature type="turn" evidence="8">
    <location>
        <begin position="271"/>
        <end position="273"/>
    </location>
</feature>
<feature type="helix" evidence="8">
    <location>
        <begin position="275"/>
        <end position="303"/>
    </location>
</feature>
<feature type="turn" evidence="8">
    <location>
        <begin position="304"/>
        <end position="307"/>
    </location>
</feature>
<feature type="strand" evidence="8">
    <location>
        <begin position="310"/>
        <end position="314"/>
    </location>
</feature>
<feature type="strand" evidence="8">
    <location>
        <begin position="325"/>
        <end position="327"/>
    </location>
</feature>
<feature type="helix" evidence="8">
    <location>
        <begin position="330"/>
        <end position="335"/>
    </location>
</feature>
<feature type="helix" evidence="8">
    <location>
        <begin position="340"/>
        <end position="350"/>
    </location>
</feature>
<feature type="strand" evidence="8">
    <location>
        <begin position="353"/>
        <end position="356"/>
    </location>
</feature>
<feature type="turn" evidence="8">
    <location>
        <begin position="367"/>
        <end position="369"/>
    </location>
</feature>
<feature type="helix" evidence="8">
    <location>
        <begin position="373"/>
        <end position="387"/>
    </location>
</feature>
<feature type="strand" evidence="8">
    <location>
        <begin position="391"/>
        <end position="394"/>
    </location>
</feature>
<feature type="helix" evidence="8">
    <location>
        <begin position="402"/>
        <end position="413"/>
    </location>
</feature>
<feature type="strand" evidence="8">
    <location>
        <begin position="417"/>
        <end position="422"/>
    </location>
</feature>
<feature type="helix" evidence="8">
    <location>
        <begin position="424"/>
        <end position="426"/>
    </location>
</feature>
<feature type="helix" evidence="8">
    <location>
        <begin position="438"/>
        <end position="444"/>
    </location>
</feature>
<feature type="helix" evidence="8">
    <location>
        <begin position="446"/>
        <end position="448"/>
    </location>
</feature>
<feature type="strand" evidence="6">
    <location>
        <begin position="460"/>
        <end position="466"/>
    </location>
</feature>
<feature type="strand" evidence="6">
    <location>
        <begin position="468"/>
        <end position="471"/>
    </location>
</feature>
<feature type="strand" evidence="6">
    <location>
        <begin position="473"/>
        <end position="478"/>
    </location>
</feature>
<feature type="strand" evidence="6">
    <location>
        <begin position="485"/>
        <end position="487"/>
    </location>
</feature>
<feature type="strand" evidence="6">
    <location>
        <begin position="492"/>
        <end position="494"/>
    </location>
</feature>
<feature type="turn" evidence="6">
    <location>
        <begin position="495"/>
        <end position="498"/>
    </location>
</feature>
<feature type="strand" evidence="6">
    <location>
        <begin position="499"/>
        <end position="505"/>
    </location>
</feature>
<feature type="strand" evidence="6">
    <location>
        <begin position="512"/>
        <end position="517"/>
    </location>
</feature>
<feature type="strand" evidence="6">
    <location>
        <begin position="519"/>
        <end position="521"/>
    </location>
</feature>
<feature type="strand" evidence="6">
    <location>
        <begin position="523"/>
        <end position="525"/>
    </location>
</feature>
<feature type="turn" evidence="6">
    <location>
        <begin position="526"/>
        <end position="528"/>
    </location>
</feature>
<feature type="strand" evidence="6">
    <location>
        <begin position="531"/>
        <end position="533"/>
    </location>
</feature>
<feature type="strand" evidence="6">
    <location>
        <begin position="535"/>
        <end position="541"/>
    </location>
</feature>
<feature type="strand" evidence="6">
    <location>
        <begin position="544"/>
        <end position="546"/>
    </location>
</feature>
<feature type="strand" evidence="6">
    <location>
        <begin position="550"/>
        <end position="554"/>
    </location>
</feature>
<feature type="strand" evidence="7">
    <location>
        <begin position="570"/>
        <end position="576"/>
    </location>
</feature>
<feature type="strand" evidence="7">
    <location>
        <begin position="579"/>
        <end position="581"/>
    </location>
</feature>
<feature type="strand" evidence="7">
    <location>
        <begin position="583"/>
        <end position="588"/>
    </location>
</feature>
<feature type="strand" evidence="7">
    <location>
        <begin position="595"/>
        <end position="597"/>
    </location>
</feature>
<feature type="strand" evidence="7">
    <location>
        <begin position="605"/>
        <end position="615"/>
    </location>
</feature>
<feature type="strand" evidence="7">
    <location>
        <begin position="622"/>
        <end position="627"/>
    </location>
</feature>
<feature type="strand" evidence="7">
    <location>
        <begin position="629"/>
        <end position="631"/>
    </location>
</feature>
<feature type="strand" evidence="7">
    <location>
        <begin position="637"/>
        <end position="639"/>
    </location>
</feature>
<feature type="strand" evidence="7">
    <location>
        <begin position="641"/>
        <end position="643"/>
    </location>
</feature>
<feature type="strand" evidence="7">
    <location>
        <begin position="645"/>
        <end position="651"/>
    </location>
</feature>
<feature type="strand" evidence="7">
    <location>
        <begin position="654"/>
        <end position="656"/>
    </location>
</feature>
<feature type="strand" evidence="7">
    <location>
        <begin position="659"/>
        <end position="664"/>
    </location>
</feature>
<organism>
    <name type="scientific">Paenibacillus polymyxa</name>
    <name type="common">Bacillus polymyxa</name>
    <dbReference type="NCBI Taxonomy" id="1406"/>
    <lineage>
        <taxon>Bacteria</taxon>
        <taxon>Bacillati</taxon>
        <taxon>Bacillota</taxon>
        <taxon>Bacilli</taxon>
        <taxon>Bacillales</taxon>
        <taxon>Paenibacillaceae</taxon>
        <taxon>Paenibacillus</taxon>
    </lineage>
</organism>
<protein>
    <recommendedName>
        <fullName>Beta/alpha-amylase</fullName>
    </recommendedName>
    <domain>
        <recommendedName>
            <fullName>Beta-amylase</fullName>
            <ecNumber>3.2.1.2</ecNumber>
        </recommendedName>
    </domain>
    <domain>
        <recommendedName>
            <fullName>Alpha-amylase</fullName>
            <ecNumber>3.2.1.1</ecNumber>
        </recommendedName>
    </domain>
</protein>
<dbReference type="EC" id="3.2.1.2"/>
<dbReference type="EC" id="3.2.1.1"/>
<dbReference type="EMBL" id="M15817">
    <property type="protein sequence ID" value="AAA85446.1"/>
    <property type="molecule type" value="Genomic_DNA"/>
</dbReference>
<dbReference type="EMBL" id="Y00150">
    <property type="protein sequence ID" value="CAA68344.1"/>
    <property type="molecule type" value="Other_DNA"/>
</dbReference>
<dbReference type="PIR" id="A29130">
    <property type="entry name" value="A29130"/>
</dbReference>
<dbReference type="PDB" id="2LAA">
    <property type="method" value="NMR"/>
    <property type="chains" value="A=455-558"/>
</dbReference>
<dbReference type="PDB" id="2LAB">
    <property type="method" value="NMR"/>
    <property type="chains" value="A=565-668"/>
</dbReference>
<dbReference type="PDB" id="3VOC">
    <property type="method" value="X-ray"/>
    <property type="resolution" value="1.95 A"/>
    <property type="chains" value="A=36-454"/>
</dbReference>
<dbReference type="PDBsum" id="2LAA"/>
<dbReference type="PDBsum" id="2LAB"/>
<dbReference type="PDBsum" id="3VOC"/>
<dbReference type="BMRB" id="P21543"/>
<dbReference type="SMR" id="P21543"/>
<dbReference type="CAZy" id="CBM25">
    <property type="family name" value="Carbohydrate-Binding Module Family 25"/>
</dbReference>
<dbReference type="CAZy" id="GH13">
    <property type="family name" value="Glycoside Hydrolase Family 13"/>
</dbReference>
<dbReference type="CAZy" id="GH14">
    <property type="family name" value="Glycoside Hydrolase Family 14"/>
</dbReference>
<dbReference type="eggNOG" id="COG0366">
    <property type="taxonomic scope" value="Bacteria"/>
</dbReference>
<dbReference type="eggNOG" id="COG1874">
    <property type="taxonomic scope" value="Bacteria"/>
</dbReference>
<dbReference type="EvolutionaryTrace" id="P21543"/>
<dbReference type="GO" id="GO:0005576">
    <property type="term" value="C:extracellular region"/>
    <property type="evidence" value="ECO:0007669"/>
    <property type="project" value="UniProtKB-SubCell"/>
</dbReference>
<dbReference type="GO" id="GO:0004556">
    <property type="term" value="F:alpha-amylase activity"/>
    <property type="evidence" value="ECO:0007669"/>
    <property type="project" value="UniProtKB-EC"/>
</dbReference>
<dbReference type="GO" id="GO:0016161">
    <property type="term" value="F:beta-amylase activity"/>
    <property type="evidence" value="ECO:0007669"/>
    <property type="project" value="UniProtKB-EC"/>
</dbReference>
<dbReference type="GO" id="GO:0046872">
    <property type="term" value="F:metal ion binding"/>
    <property type="evidence" value="ECO:0007669"/>
    <property type="project" value="UniProtKB-KW"/>
</dbReference>
<dbReference type="GO" id="GO:2001070">
    <property type="term" value="F:starch binding"/>
    <property type="evidence" value="ECO:0007669"/>
    <property type="project" value="InterPro"/>
</dbReference>
<dbReference type="GO" id="GO:0000272">
    <property type="term" value="P:polysaccharide catabolic process"/>
    <property type="evidence" value="ECO:0007669"/>
    <property type="project" value="UniProtKB-KW"/>
</dbReference>
<dbReference type="CDD" id="cd11339">
    <property type="entry name" value="AmyAc_bac_CMD_like_2"/>
    <property type="match status" value="1"/>
</dbReference>
<dbReference type="Gene3D" id="3.20.20.80">
    <property type="entry name" value="Glycosidases"/>
    <property type="match status" value="2"/>
</dbReference>
<dbReference type="Gene3D" id="2.60.40.1180">
    <property type="entry name" value="Golgi alpha-mannosidase II"/>
    <property type="match status" value="1"/>
</dbReference>
<dbReference type="Gene3D" id="2.60.40.10">
    <property type="entry name" value="Immunoglobulins"/>
    <property type="match status" value="2"/>
</dbReference>
<dbReference type="InterPro" id="IPR031319">
    <property type="entry name" value="A-amylase_C"/>
</dbReference>
<dbReference type="InterPro" id="IPR005085">
    <property type="entry name" value="CBM25"/>
</dbReference>
<dbReference type="InterPro" id="IPR006047">
    <property type="entry name" value="Glyco_hydro_13_cat_dom"/>
</dbReference>
<dbReference type="InterPro" id="IPR001554">
    <property type="entry name" value="Glyco_hydro_14"/>
</dbReference>
<dbReference type="InterPro" id="IPR018238">
    <property type="entry name" value="Glyco_hydro_14_CS"/>
</dbReference>
<dbReference type="InterPro" id="IPR000125">
    <property type="entry name" value="Glyco_hydro_14A_bac"/>
</dbReference>
<dbReference type="InterPro" id="IPR013780">
    <property type="entry name" value="Glyco_hydro_b"/>
</dbReference>
<dbReference type="InterPro" id="IPR017853">
    <property type="entry name" value="Glycoside_hydrolase_SF"/>
</dbReference>
<dbReference type="InterPro" id="IPR013783">
    <property type="entry name" value="Ig-like_fold"/>
</dbReference>
<dbReference type="PANTHER" id="PTHR10357:SF215">
    <property type="entry name" value="ALPHA-AMYLASE 1"/>
    <property type="match status" value="1"/>
</dbReference>
<dbReference type="PANTHER" id="PTHR10357">
    <property type="entry name" value="ALPHA-AMYLASE FAMILY MEMBER"/>
    <property type="match status" value="1"/>
</dbReference>
<dbReference type="Pfam" id="PF00128">
    <property type="entry name" value="Alpha-amylase"/>
    <property type="match status" value="1"/>
</dbReference>
<dbReference type="Pfam" id="PF03423">
    <property type="entry name" value="CBM_25"/>
    <property type="match status" value="2"/>
</dbReference>
<dbReference type="Pfam" id="PF01373">
    <property type="entry name" value="Glyco_hydro_14"/>
    <property type="match status" value="1"/>
</dbReference>
<dbReference type="PRINTS" id="PR00750">
    <property type="entry name" value="BETAAMYLASE"/>
</dbReference>
<dbReference type="PRINTS" id="PR00841">
    <property type="entry name" value="GLHYDLASE14A"/>
</dbReference>
<dbReference type="SMART" id="SM00642">
    <property type="entry name" value="Aamy"/>
    <property type="match status" value="1"/>
</dbReference>
<dbReference type="SMART" id="SM00632">
    <property type="entry name" value="Aamy_C"/>
    <property type="match status" value="1"/>
</dbReference>
<dbReference type="SMART" id="SM01066">
    <property type="entry name" value="CBM_25"/>
    <property type="match status" value="2"/>
</dbReference>
<dbReference type="SUPFAM" id="SSF51445">
    <property type="entry name" value="(Trans)glycosidases"/>
    <property type="match status" value="2"/>
</dbReference>
<dbReference type="SUPFAM" id="SSF51011">
    <property type="entry name" value="Glycosyl hydrolase domain"/>
    <property type="match status" value="1"/>
</dbReference>
<dbReference type="PROSITE" id="PS00506">
    <property type="entry name" value="BETA_AMYLASE_1"/>
    <property type="match status" value="1"/>
</dbReference>
<dbReference type="PROSITE" id="PS00679">
    <property type="entry name" value="BETA_AMYLASE_2"/>
    <property type="match status" value="1"/>
</dbReference>
<name>AMYB_PAEPO</name>
<evidence type="ECO:0000250" key="1">
    <source>
        <dbReference type="UniProtKB" id="P36924"/>
    </source>
</evidence>
<evidence type="ECO:0000255" key="2">
    <source>
        <dbReference type="PROSITE-ProRule" id="PRU10050"/>
    </source>
</evidence>
<evidence type="ECO:0000256" key="3">
    <source>
        <dbReference type="SAM" id="MobiDB-lite"/>
    </source>
</evidence>
<evidence type="ECO:0000269" key="4">
    <source>
    </source>
</evidence>
<evidence type="ECO:0000305" key="5"/>
<evidence type="ECO:0007829" key="6">
    <source>
        <dbReference type="PDB" id="2LAA"/>
    </source>
</evidence>
<evidence type="ECO:0007829" key="7">
    <source>
        <dbReference type="PDB" id="2LAB"/>
    </source>
</evidence>
<evidence type="ECO:0007829" key="8">
    <source>
        <dbReference type="PDB" id="3VOC"/>
    </source>
</evidence>
<reference key="1">
    <citation type="journal article" date="1987" name="J. Bacteriol.">
        <title>Cloning and nucleotide sequence of the gene coding for enzymatically active fragments of the Bacillus polymyxa beta-amylase.</title>
        <authorList>
            <person name="Kawazu T."/>
            <person name="Nakanishi Y."/>
            <person name="Uozumi N."/>
            <person name="Sasaki T."/>
            <person name="Yamagata H."/>
            <person name="Tsukagoshi N."/>
            <person name="Udaka S."/>
        </authorList>
    </citation>
    <scope>NUCLEOTIDE SEQUENCE [GENOMIC DNA] OF 1-936</scope>
    <scope>PARTIAL PROTEIN SEQUENCE</scope>
    <source>
        <strain>72</strain>
    </source>
</reference>
<reference key="2">
    <citation type="journal article" date="1989" name="J. Bacteriol.">
        <title>A single gene directs synthesis of a precursor protein with beta- and alpha-amylase activities in Bacillus polymyxa.</title>
        <authorList>
            <person name="Uozumi N."/>
            <person name="Sakurai K."/>
            <person name="Sasaki T."/>
            <person name="Takekawa S."/>
            <person name="Yamagata H."/>
            <person name="Tsukagoshi N."/>
            <person name="Udaka S."/>
        </authorList>
    </citation>
    <scope>NUCLEOTIDE SEQUENCE [GENOMIC DNA] OF 689-1196</scope>
    <scope>PARTIAL PROTEIN SEQUENCE</scope>
    <source>
        <strain>72</strain>
    </source>
</reference>
<reference key="3">
    <citation type="journal article" date="1987" name="Nucleic Acids Res.">
        <title>Sequence of an active fragment of B. polymyxa beta amylase.</title>
        <authorList>
            <person name="Rhodes C."/>
            <person name="Strasser J."/>
            <person name="Friedberg F."/>
        </authorList>
    </citation>
    <scope>NUCLEOTIDE SEQUENCE [GENOMIC DNA] OF 1-776</scope>
    <source>
        <strain>ATCC 8523 / DSM 356 / CCM 1465 / CIP A45 / VKM B-418</strain>
    </source>
</reference>
<reference key="4">
    <citation type="journal article" date="1991" name="Biochemistry">
        <title>Structural and functional roles of cysteine residues of Bacillus polymyxa beta-amylase.</title>
        <authorList>
            <person name="Uozumi N."/>
            <person name="Matsuda T."/>
            <person name="Tsukagoshi N."/>
            <person name="Udaka S."/>
        </authorList>
    </citation>
    <scope>DISULFIDE BOND</scope>
    <scope>MUTAGENESIS OF CYSTEINE RESIDUES</scope>
</reference>
<comment type="function">
    <text>The precursor protein is proteolytically cleaved to produce multiform beta-amylases and a 48 kDa alpha-amylase after secretion.</text>
</comment>
<comment type="catalytic activity">
    <reaction>
        <text>Hydrolysis of (1-&gt;4)-alpha-D-glucosidic linkages in polysaccharides so as to remove successive maltose units from the non-reducing ends of the chains.</text>
        <dbReference type="EC" id="3.2.1.2"/>
    </reaction>
</comment>
<comment type="catalytic activity">
    <reaction>
        <text>Endohydrolysis of (1-&gt;4)-alpha-D-glucosidic linkages in polysaccharides containing three or more (1-&gt;4)-alpha-linked D-glucose units.</text>
        <dbReference type="EC" id="3.2.1.1"/>
    </reaction>
</comment>
<comment type="cofactor">
    <cofactor evidence="1">
        <name>Ca(2+)</name>
        <dbReference type="ChEBI" id="CHEBI:29108"/>
    </cofactor>
    <text evidence="1">Binds 1 Ca(2+) ion per subunit.</text>
</comment>
<comment type="subcellular location">
    <subcellularLocation>
        <location>Secreted</location>
    </subcellularLocation>
</comment>
<comment type="similarity">
    <text evidence="5">In the N-terminal section; belongs to the glycosyl hydrolase 14 family.</text>
</comment>
<comment type="similarity">
    <text evidence="5">In the C-terminal section; belongs to the glycosyl hydrolase 13 family.</text>
</comment>